<gene>
    <name evidence="1" type="primary">ispDF</name>
    <name type="ordered locus">RHECIAT_CH0002043</name>
</gene>
<name>ISPDF_RHIE6</name>
<proteinExistence type="inferred from homology"/>
<accession>B3PYS4</accession>
<keyword id="KW-0414">Isoprene biosynthesis</keyword>
<keyword id="KW-0456">Lyase</keyword>
<keyword id="KW-0479">Metal-binding</keyword>
<keyword id="KW-0511">Multifunctional enzyme</keyword>
<keyword id="KW-0548">Nucleotidyltransferase</keyword>
<keyword id="KW-0808">Transferase</keyword>
<protein>
    <recommendedName>
        <fullName evidence="1">Bifunctional enzyme IspD/IspF</fullName>
    </recommendedName>
    <domain>
        <recommendedName>
            <fullName evidence="1">2-C-methyl-D-erythritol 4-phosphate cytidylyltransferase</fullName>
            <ecNumber evidence="1">2.7.7.60</ecNumber>
        </recommendedName>
        <alternativeName>
            <fullName evidence="1">4-diphosphocytidyl-2C-methyl-D-erythritol synthase</fullName>
        </alternativeName>
        <alternativeName>
            <fullName evidence="1">MEP cytidylyltransferase</fullName>
            <shortName evidence="1">MCT</shortName>
        </alternativeName>
    </domain>
    <domain>
        <recommendedName>
            <fullName evidence="1">2-C-methyl-D-erythritol 2,4-cyclodiphosphate synthase</fullName>
            <shortName evidence="1">MECDP-synthase</shortName>
            <shortName evidence="1">MECPP-synthase</shortName>
            <shortName evidence="1">MECPS</shortName>
            <ecNumber evidence="1">4.6.1.12</ecNumber>
        </recommendedName>
    </domain>
</protein>
<feature type="chain" id="PRO_1000191077" description="Bifunctional enzyme IspD/IspF">
    <location>
        <begin position="1"/>
        <end position="405"/>
    </location>
</feature>
<feature type="region of interest" description="2-C-methyl-D-erythritol 4-phosphate cytidylyltransferase" evidence="1">
    <location>
        <begin position="1"/>
        <end position="246"/>
    </location>
</feature>
<feature type="region of interest" description="2-C-methyl-D-erythritol 2,4-cyclodiphosphate synthase" evidence="1">
    <location>
        <begin position="247"/>
        <end position="405"/>
    </location>
</feature>
<feature type="binding site" evidence="1">
    <location>
        <begin position="253"/>
        <end position="255"/>
    </location>
    <ligand>
        <name>4-CDP-2-C-methyl-D-erythritol 2-phosphate</name>
        <dbReference type="ChEBI" id="CHEBI:57919"/>
    </ligand>
</feature>
<feature type="binding site" evidence="1">
    <location>
        <position position="253"/>
    </location>
    <ligand>
        <name>a divalent metal cation</name>
        <dbReference type="ChEBI" id="CHEBI:60240"/>
    </ligand>
</feature>
<feature type="binding site" evidence="1">
    <location>
        <position position="255"/>
    </location>
    <ligand>
        <name>a divalent metal cation</name>
        <dbReference type="ChEBI" id="CHEBI:60240"/>
    </ligand>
</feature>
<feature type="binding site" evidence="1">
    <location>
        <begin position="279"/>
        <end position="280"/>
    </location>
    <ligand>
        <name>4-CDP-2-C-methyl-D-erythritol 2-phosphate</name>
        <dbReference type="ChEBI" id="CHEBI:57919"/>
    </ligand>
</feature>
<feature type="binding site" evidence="1">
    <location>
        <position position="287"/>
    </location>
    <ligand>
        <name>a divalent metal cation</name>
        <dbReference type="ChEBI" id="CHEBI:60240"/>
    </ligand>
</feature>
<feature type="binding site" evidence="1">
    <location>
        <begin position="301"/>
        <end position="303"/>
    </location>
    <ligand>
        <name>4-CDP-2-C-methyl-D-erythritol 2-phosphate</name>
        <dbReference type="ChEBI" id="CHEBI:57919"/>
    </ligand>
</feature>
<feature type="binding site" evidence="1">
    <location>
        <begin position="377"/>
        <end position="380"/>
    </location>
    <ligand>
        <name>4-CDP-2-C-methyl-D-erythritol 2-phosphate</name>
        <dbReference type="ChEBI" id="CHEBI:57919"/>
    </ligand>
</feature>
<feature type="binding site" evidence="1">
    <location>
        <position position="384"/>
    </location>
    <ligand>
        <name>4-CDP-2-C-methyl-D-erythritol 2-phosphate</name>
        <dbReference type="ChEBI" id="CHEBI:57919"/>
    </ligand>
</feature>
<feature type="binding site" evidence="1">
    <location>
        <position position="387"/>
    </location>
    <ligand>
        <name>4-CDP-2-C-methyl-D-erythritol 2-phosphate</name>
        <dbReference type="ChEBI" id="CHEBI:57919"/>
    </ligand>
</feature>
<feature type="site" description="Transition state stabilizer" evidence="1">
    <location>
        <position position="24"/>
    </location>
</feature>
<feature type="site" description="Transition state stabilizer" evidence="1">
    <location>
        <position position="33"/>
    </location>
</feature>
<feature type="site" description="Positions MEP for the nucleophilic attack" evidence="1">
    <location>
        <position position="167"/>
    </location>
</feature>
<feature type="site" description="Positions MEP for the nucleophilic attack" evidence="1">
    <location>
        <position position="224"/>
    </location>
</feature>
<feature type="site" description="Transition state stabilizer" evidence="1">
    <location>
        <position position="279"/>
    </location>
</feature>
<feature type="site" description="Transition state stabilizer" evidence="1">
    <location>
        <position position="378"/>
    </location>
</feature>
<reference key="1">
    <citation type="journal article" date="2010" name="Appl. Environ. Microbiol.">
        <title>Conserved symbiotic plasmid DNA sequences in the multireplicon pangenomic structure of Rhizobium etli.</title>
        <authorList>
            <person name="Gonzalez V."/>
            <person name="Acosta J.L."/>
            <person name="Santamaria R.I."/>
            <person name="Bustos P."/>
            <person name="Fernandez J.L."/>
            <person name="Hernandez Gonzalez I.L."/>
            <person name="Diaz R."/>
            <person name="Flores M."/>
            <person name="Palacios R."/>
            <person name="Mora J."/>
            <person name="Davila G."/>
        </authorList>
    </citation>
    <scope>NUCLEOTIDE SEQUENCE [LARGE SCALE GENOMIC DNA]</scope>
    <source>
        <strain>CIAT 652</strain>
    </source>
</reference>
<dbReference type="EC" id="2.7.7.60" evidence="1"/>
<dbReference type="EC" id="4.6.1.12" evidence="1"/>
<dbReference type="EMBL" id="CP001074">
    <property type="protein sequence ID" value="ACE91003.1"/>
    <property type="molecule type" value="Genomic_DNA"/>
</dbReference>
<dbReference type="SMR" id="B3PYS4"/>
<dbReference type="KEGG" id="rec:RHECIAT_CH0002043"/>
<dbReference type="eggNOG" id="COG0245">
    <property type="taxonomic scope" value="Bacteria"/>
</dbReference>
<dbReference type="eggNOG" id="COG1211">
    <property type="taxonomic scope" value="Bacteria"/>
</dbReference>
<dbReference type="HOGENOM" id="CLU_042800_1_0_5"/>
<dbReference type="UniPathway" id="UPA00056">
    <property type="reaction ID" value="UER00093"/>
</dbReference>
<dbReference type="UniPathway" id="UPA00056">
    <property type="reaction ID" value="UER00095"/>
</dbReference>
<dbReference type="Proteomes" id="UP000008817">
    <property type="component" value="Chromosome"/>
</dbReference>
<dbReference type="GO" id="GO:0008685">
    <property type="term" value="F:2-C-methyl-D-erythritol 2,4-cyclodiphosphate synthase activity"/>
    <property type="evidence" value="ECO:0007669"/>
    <property type="project" value="UniProtKB-UniRule"/>
</dbReference>
<dbReference type="GO" id="GO:0050518">
    <property type="term" value="F:2-C-methyl-D-erythritol 4-phosphate cytidylyltransferase activity"/>
    <property type="evidence" value="ECO:0007669"/>
    <property type="project" value="UniProtKB-UniRule"/>
</dbReference>
<dbReference type="GO" id="GO:0046872">
    <property type="term" value="F:metal ion binding"/>
    <property type="evidence" value="ECO:0007669"/>
    <property type="project" value="UniProtKB-KW"/>
</dbReference>
<dbReference type="GO" id="GO:0019288">
    <property type="term" value="P:isopentenyl diphosphate biosynthetic process, methylerythritol 4-phosphate pathway"/>
    <property type="evidence" value="ECO:0007669"/>
    <property type="project" value="UniProtKB-UniRule"/>
</dbReference>
<dbReference type="GO" id="GO:0016114">
    <property type="term" value="P:terpenoid biosynthetic process"/>
    <property type="evidence" value="ECO:0007669"/>
    <property type="project" value="InterPro"/>
</dbReference>
<dbReference type="CDD" id="cd02516">
    <property type="entry name" value="CDP-ME_synthetase"/>
    <property type="match status" value="1"/>
</dbReference>
<dbReference type="CDD" id="cd00554">
    <property type="entry name" value="MECDP_synthase"/>
    <property type="match status" value="1"/>
</dbReference>
<dbReference type="FunFam" id="3.90.550.10:FF:000003">
    <property type="entry name" value="2-C-methyl-D-erythritol 4-phosphate cytidylyltransferase"/>
    <property type="match status" value="1"/>
</dbReference>
<dbReference type="Gene3D" id="3.30.1330.50">
    <property type="entry name" value="2-C-methyl-D-erythritol 2,4-cyclodiphosphate synthase"/>
    <property type="match status" value="1"/>
</dbReference>
<dbReference type="Gene3D" id="3.90.550.10">
    <property type="entry name" value="Spore Coat Polysaccharide Biosynthesis Protein SpsA, Chain A"/>
    <property type="match status" value="1"/>
</dbReference>
<dbReference type="HAMAP" id="MF_00108">
    <property type="entry name" value="IspD"/>
    <property type="match status" value="1"/>
</dbReference>
<dbReference type="HAMAP" id="MF_01520">
    <property type="entry name" value="IspDF"/>
    <property type="match status" value="1"/>
</dbReference>
<dbReference type="HAMAP" id="MF_00107">
    <property type="entry name" value="IspF"/>
    <property type="match status" value="1"/>
</dbReference>
<dbReference type="InterPro" id="IPR001228">
    <property type="entry name" value="IspD"/>
</dbReference>
<dbReference type="InterPro" id="IPR026596">
    <property type="entry name" value="IspD/F"/>
</dbReference>
<dbReference type="InterPro" id="IPR034683">
    <property type="entry name" value="IspD/TarI"/>
</dbReference>
<dbReference type="InterPro" id="IPR018294">
    <property type="entry name" value="ISPD_synthase_CS"/>
</dbReference>
<dbReference type="InterPro" id="IPR003526">
    <property type="entry name" value="MECDP_synthase"/>
</dbReference>
<dbReference type="InterPro" id="IPR020555">
    <property type="entry name" value="MECDP_synthase_CS"/>
</dbReference>
<dbReference type="InterPro" id="IPR036571">
    <property type="entry name" value="MECDP_synthase_sf"/>
</dbReference>
<dbReference type="InterPro" id="IPR029044">
    <property type="entry name" value="Nucleotide-diphossugar_trans"/>
</dbReference>
<dbReference type="NCBIfam" id="TIGR00453">
    <property type="entry name" value="ispD"/>
    <property type="match status" value="1"/>
</dbReference>
<dbReference type="NCBIfam" id="TIGR00151">
    <property type="entry name" value="ispF"/>
    <property type="match status" value="1"/>
</dbReference>
<dbReference type="NCBIfam" id="NF006899">
    <property type="entry name" value="PRK09382.1"/>
    <property type="match status" value="1"/>
</dbReference>
<dbReference type="PANTHER" id="PTHR43181">
    <property type="entry name" value="2-C-METHYL-D-ERYTHRITOL 2,4-CYCLODIPHOSPHATE SYNTHASE, CHLOROPLASTIC"/>
    <property type="match status" value="1"/>
</dbReference>
<dbReference type="PANTHER" id="PTHR43181:SF1">
    <property type="entry name" value="2-C-METHYL-D-ERYTHRITOL 2,4-CYCLODIPHOSPHATE SYNTHASE, CHLOROPLASTIC"/>
    <property type="match status" value="1"/>
</dbReference>
<dbReference type="Pfam" id="PF01128">
    <property type="entry name" value="IspD"/>
    <property type="match status" value="1"/>
</dbReference>
<dbReference type="Pfam" id="PF02542">
    <property type="entry name" value="YgbB"/>
    <property type="match status" value="1"/>
</dbReference>
<dbReference type="SUPFAM" id="SSF69765">
    <property type="entry name" value="IpsF-like"/>
    <property type="match status" value="1"/>
</dbReference>
<dbReference type="SUPFAM" id="SSF53448">
    <property type="entry name" value="Nucleotide-diphospho-sugar transferases"/>
    <property type="match status" value="1"/>
</dbReference>
<dbReference type="PROSITE" id="PS01295">
    <property type="entry name" value="ISPD"/>
    <property type="match status" value="1"/>
</dbReference>
<dbReference type="PROSITE" id="PS01350">
    <property type="entry name" value="ISPF"/>
    <property type="match status" value="1"/>
</dbReference>
<sequence>MLQMPSKQPISAGIVIVAAGRGERAGSPTEGPKQYRPIGGKPVIVHTLENFMTWEPATAIVVVIHPDDEALFAKAFRHIISATPIETVHGGPTRQRSVLAGLRYLKDKHVSHVLIHDAVRPFFDHTLLDRIAENLANGALAVLPAMPVTDTLKRADGAGTVLTTVSREQLFAAQTPQSFAFETILDAHEKAAASGRSDFTDDASIAEWLGIPVTIVEGTGDNVKLTVKKDIAMADDKLSASLLPDVRTGNGYDVHQLEAGDGVTLCGVFIPHDQKLKGHSDADVALHALTDALLATCGAGDIGDHFPPSDPQWKGAASRIFIEHAARIVRERGGTIMNADVSLIAEAPKVGPHREAMRANLSEYLGIDLERCSVKATTNETIGFVGRREGIAAIATATVVYRGRT</sequence>
<comment type="function">
    <text evidence="1">Bifunctional enzyme that catalyzes the formation of 4-diphosphocytidyl-2-C-methyl-D-erythritol from CTP and 2-C-methyl-D-erythritol 4-phosphate (MEP) (IspD), and catalyzes the conversion of 4-diphosphocytidyl-2-C-methyl-D-erythritol 2-phosphate (CDP-ME2P) to 2-C-methyl-D-erythritol 2,4-cyclodiphosphate (ME-CPP) with a corresponding release of cytidine 5-monophosphate (CMP) (IspF).</text>
</comment>
<comment type="catalytic activity">
    <reaction evidence="1">
        <text>2-C-methyl-D-erythritol 4-phosphate + CTP + H(+) = 4-CDP-2-C-methyl-D-erythritol + diphosphate</text>
        <dbReference type="Rhea" id="RHEA:13429"/>
        <dbReference type="ChEBI" id="CHEBI:15378"/>
        <dbReference type="ChEBI" id="CHEBI:33019"/>
        <dbReference type="ChEBI" id="CHEBI:37563"/>
        <dbReference type="ChEBI" id="CHEBI:57823"/>
        <dbReference type="ChEBI" id="CHEBI:58262"/>
        <dbReference type="EC" id="2.7.7.60"/>
    </reaction>
</comment>
<comment type="catalytic activity">
    <reaction evidence="1">
        <text>4-CDP-2-C-methyl-D-erythritol 2-phosphate = 2-C-methyl-D-erythritol 2,4-cyclic diphosphate + CMP</text>
        <dbReference type="Rhea" id="RHEA:23864"/>
        <dbReference type="ChEBI" id="CHEBI:57919"/>
        <dbReference type="ChEBI" id="CHEBI:58483"/>
        <dbReference type="ChEBI" id="CHEBI:60377"/>
        <dbReference type="EC" id="4.6.1.12"/>
    </reaction>
</comment>
<comment type="cofactor">
    <cofactor evidence="1">
        <name>a divalent metal cation</name>
        <dbReference type="ChEBI" id="CHEBI:60240"/>
    </cofactor>
</comment>
<comment type="pathway">
    <text evidence="1">Isoprenoid biosynthesis; isopentenyl diphosphate biosynthesis via DXP pathway; isopentenyl diphosphate from 1-deoxy-D-xylulose 5-phosphate: step 2/6.</text>
</comment>
<comment type="pathway">
    <text evidence="1">Isoprenoid biosynthesis; isopentenyl diphosphate biosynthesis via DXP pathway; isopentenyl diphosphate from 1-deoxy-D-xylulose 5-phosphate: step 4/6.</text>
</comment>
<comment type="similarity">
    <text evidence="1">In the N-terminal section; belongs to the IspD/TarI cytidylyltransferase family. IspD subfamily.</text>
</comment>
<comment type="similarity">
    <text evidence="1">In the C-terminal section; belongs to the IspF family.</text>
</comment>
<evidence type="ECO:0000255" key="1">
    <source>
        <dbReference type="HAMAP-Rule" id="MF_01520"/>
    </source>
</evidence>
<organism>
    <name type="scientific">Rhizobium etli (strain CIAT 652)</name>
    <dbReference type="NCBI Taxonomy" id="491916"/>
    <lineage>
        <taxon>Bacteria</taxon>
        <taxon>Pseudomonadati</taxon>
        <taxon>Pseudomonadota</taxon>
        <taxon>Alphaproteobacteria</taxon>
        <taxon>Hyphomicrobiales</taxon>
        <taxon>Rhizobiaceae</taxon>
        <taxon>Rhizobium/Agrobacterium group</taxon>
        <taxon>Rhizobium</taxon>
    </lineage>
</organism>